<organism>
    <name type="scientific">Photorhabdus laumondii subsp. laumondii (strain DSM 15139 / CIP 105565 / TT01)</name>
    <name type="common">Photorhabdus luminescens subsp. laumondii</name>
    <dbReference type="NCBI Taxonomy" id="243265"/>
    <lineage>
        <taxon>Bacteria</taxon>
        <taxon>Pseudomonadati</taxon>
        <taxon>Pseudomonadota</taxon>
        <taxon>Gammaproteobacteria</taxon>
        <taxon>Enterobacterales</taxon>
        <taxon>Morganellaceae</taxon>
        <taxon>Photorhabdus</taxon>
    </lineage>
</organism>
<sequence length="151" mass="18003">MKYQQLENLECGWKWTYLMKKHQEGELITKYIENSAAHAAVDKLIELESEPVRVLKWIEQHMNPDLSNRMKQTIRARRKRHFNAEHQHTRKKSIDLDFPVWHRLSALSQRRGNTLSETIIQLIEDAERKEKYANQMSSLKHDLEAILGKKE</sequence>
<evidence type="ECO:0000255" key="1">
    <source>
        <dbReference type="HAMAP-Rule" id="MF_01073"/>
    </source>
</evidence>
<accession>Q7N603</accession>
<comment type="function">
    <text evidence="1">Required for spatial organization of the terminus region of the chromosome (Ter macrodomain) during the cell cycle. Prevents early segregation of duplicated Ter macrodomains during cell division. Binds specifically to matS, which is a 13 bp signature motif repeated within the Ter macrodomain.</text>
</comment>
<comment type="subunit">
    <text evidence="1">Homodimer.</text>
</comment>
<comment type="subcellular location">
    <subcellularLocation>
        <location evidence="1">Cytoplasm</location>
    </subcellularLocation>
</comment>
<comment type="similarity">
    <text evidence="1">Belongs to the MatP family.</text>
</comment>
<proteinExistence type="inferred from homology"/>
<protein>
    <recommendedName>
        <fullName evidence="1">Macrodomain Ter protein</fullName>
    </recommendedName>
</protein>
<feature type="chain" id="PRO_0000070353" description="Macrodomain Ter protein">
    <location>
        <begin position="1"/>
        <end position="151"/>
    </location>
</feature>
<gene>
    <name evidence="1" type="primary">matP</name>
    <name type="ordered locus">plu1774</name>
</gene>
<dbReference type="EMBL" id="BX571865">
    <property type="protein sequence ID" value="CAE14067.1"/>
    <property type="molecule type" value="Genomic_DNA"/>
</dbReference>
<dbReference type="RefSeq" id="WP_011146052.1">
    <property type="nucleotide sequence ID" value="NC_005126.1"/>
</dbReference>
<dbReference type="SMR" id="Q7N603"/>
<dbReference type="STRING" id="243265.plu1774"/>
<dbReference type="GeneID" id="48848054"/>
<dbReference type="KEGG" id="plu:plu1774"/>
<dbReference type="eggNOG" id="COG3120">
    <property type="taxonomic scope" value="Bacteria"/>
</dbReference>
<dbReference type="HOGENOM" id="CLU_142157_0_0_6"/>
<dbReference type="OrthoDB" id="5814691at2"/>
<dbReference type="Proteomes" id="UP000002514">
    <property type="component" value="Chromosome"/>
</dbReference>
<dbReference type="GO" id="GO:0005737">
    <property type="term" value="C:cytoplasm"/>
    <property type="evidence" value="ECO:0007669"/>
    <property type="project" value="UniProtKB-SubCell"/>
</dbReference>
<dbReference type="GO" id="GO:0043565">
    <property type="term" value="F:sequence-specific DNA binding"/>
    <property type="evidence" value="ECO:0007669"/>
    <property type="project" value="UniProtKB-UniRule"/>
</dbReference>
<dbReference type="GO" id="GO:0051301">
    <property type="term" value="P:cell division"/>
    <property type="evidence" value="ECO:0007669"/>
    <property type="project" value="UniProtKB-UniRule"/>
</dbReference>
<dbReference type="GO" id="GO:0006355">
    <property type="term" value="P:regulation of DNA-templated transcription"/>
    <property type="evidence" value="ECO:0007669"/>
    <property type="project" value="InterPro"/>
</dbReference>
<dbReference type="Gene3D" id="1.20.1270.380">
    <property type="entry name" value="MatP, N-terminal domain"/>
    <property type="match status" value="1"/>
</dbReference>
<dbReference type="Gene3D" id="1.10.1220.10">
    <property type="entry name" value="Met repressor-like"/>
    <property type="match status" value="1"/>
</dbReference>
<dbReference type="HAMAP" id="MF_01073">
    <property type="entry name" value="MatP"/>
    <property type="match status" value="1"/>
</dbReference>
<dbReference type="InterPro" id="IPR013321">
    <property type="entry name" value="Arc_rbn_hlx_hlx"/>
</dbReference>
<dbReference type="InterPro" id="IPR009390">
    <property type="entry name" value="MatP"/>
</dbReference>
<dbReference type="InterPro" id="IPR035375">
    <property type="entry name" value="MatP_C"/>
</dbReference>
<dbReference type="InterPro" id="IPR035087">
    <property type="entry name" value="MatP_N"/>
</dbReference>
<dbReference type="InterPro" id="IPR038339">
    <property type="entry name" value="MatP_N_sf"/>
</dbReference>
<dbReference type="NCBIfam" id="NF003471">
    <property type="entry name" value="PRK05097.1"/>
    <property type="match status" value="1"/>
</dbReference>
<dbReference type="Pfam" id="PF06303">
    <property type="entry name" value="MatP"/>
    <property type="match status" value="1"/>
</dbReference>
<dbReference type="Pfam" id="PF17414">
    <property type="entry name" value="MatP_C"/>
    <property type="match status" value="1"/>
</dbReference>
<reference key="1">
    <citation type="journal article" date="2003" name="Nat. Biotechnol.">
        <title>The genome sequence of the entomopathogenic bacterium Photorhabdus luminescens.</title>
        <authorList>
            <person name="Duchaud E."/>
            <person name="Rusniok C."/>
            <person name="Frangeul L."/>
            <person name="Buchrieser C."/>
            <person name="Givaudan A."/>
            <person name="Taourit S."/>
            <person name="Bocs S."/>
            <person name="Boursaux-Eude C."/>
            <person name="Chandler M."/>
            <person name="Charles J.-F."/>
            <person name="Dassa E."/>
            <person name="Derose R."/>
            <person name="Derzelle S."/>
            <person name="Freyssinet G."/>
            <person name="Gaudriault S."/>
            <person name="Medigue C."/>
            <person name="Lanois A."/>
            <person name="Powell K."/>
            <person name="Siguier P."/>
            <person name="Vincent R."/>
            <person name="Wingate V."/>
            <person name="Zouine M."/>
            <person name="Glaser P."/>
            <person name="Boemare N."/>
            <person name="Danchin A."/>
            <person name="Kunst F."/>
        </authorList>
    </citation>
    <scope>NUCLEOTIDE SEQUENCE [LARGE SCALE GENOMIC DNA]</scope>
    <source>
        <strain>DSM 15139 / CIP 105565 / TT01</strain>
    </source>
</reference>
<keyword id="KW-0131">Cell cycle</keyword>
<keyword id="KW-0132">Cell division</keyword>
<keyword id="KW-0963">Cytoplasm</keyword>
<keyword id="KW-0238">DNA-binding</keyword>
<keyword id="KW-1185">Reference proteome</keyword>
<name>MATP_PHOLL</name>